<protein>
    <recommendedName>
        <fullName evidence="1">Biotin synthase</fullName>
        <ecNumber evidence="1">2.8.1.6</ecNumber>
    </recommendedName>
</protein>
<proteinExistence type="inferred from homology"/>
<dbReference type="EC" id="2.8.1.6" evidence="1"/>
<dbReference type="EMBL" id="CP001043">
    <property type="protein sequence ID" value="ACC69363.1"/>
    <property type="molecule type" value="Genomic_DNA"/>
</dbReference>
<dbReference type="RefSeq" id="WP_012399592.1">
    <property type="nucleotide sequence ID" value="NC_010622.1"/>
</dbReference>
<dbReference type="SMR" id="B2JKH4"/>
<dbReference type="STRING" id="391038.Bphy_0170"/>
<dbReference type="KEGG" id="bph:Bphy_0170"/>
<dbReference type="eggNOG" id="COG0502">
    <property type="taxonomic scope" value="Bacteria"/>
</dbReference>
<dbReference type="HOGENOM" id="CLU_033172_1_2_4"/>
<dbReference type="OrthoDB" id="9786826at2"/>
<dbReference type="UniPathway" id="UPA00078">
    <property type="reaction ID" value="UER00162"/>
</dbReference>
<dbReference type="Proteomes" id="UP000001192">
    <property type="component" value="Chromosome 1"/>
</dbReference>
<dbReference type="GO" id="GO:0051537">
    <property type="term" value="F:2 iron, 2 sulfur cluster binding"/>
    <property type="evidence" value="ECO:0007669"/>
    <property type="project" value="UniProtKB-KW"/>
</dbReference>
<dbReference type="GO" id="GO:0051539">
    <property type="term" value="F:4 iron, 4 sulfur cluster binding"/>
    <property type="evidence" value="ECO:0007669"/>
    <property type="project" value="UniProtKB-KW"/>
</dbReference>
<dbReference type="GO" id="GO:0004076">
    <property type="term" value="F:biotin synthase activity"/>
    <property type="evidence" value="ECO:0007669"/>
    <property type="project" value="UniProtKB-UniRule"/>
</dbReference>
<dbReference type="GO" id="GO:0005506">
    <property type="term" value="F:iron ion binding"/>
    <property type="evidence" value="ECO:0007669"/>
    <property type="project" value="UniProtKB-UniRule"/>
</dbReference>
<dbReference type="GO" id="GO:0009102">
    <property type="term" value="P:biotin biosynthetic process"/>
    <property type="evidence" value="ECO:0007669"/>
    <property type="project" value="UniProtKB-UniRule"/>
</dbReference>
<dbReference type="CDD" id="cd01335">
    <property type="entry name" value="Radical_SAM"/>
    <property type="match status" value="1"/>
</dbReference>
<dbReference type="FunFam" id="3.20.20.70:FF:000011">
    <property type="entry name" value="Biotin synthase"/>
    <property type="match status" value="1"/>
</dbReference>
<dbReference type="Gene3D" id="3.20.20.70">
    <property type="entry name" value="Aldolase class I"/>
    <property type="match status" value="1"/>
</dbReference>
<dbReference type="HAMAP" id="MF_01694">
    <property type="entry name" value="BioB"/>
    <property type="match status" value="1"/>
</dbReference>
<dbReference type="InterPro" id="IPR013785">
    <property type="entry name" value="Aldolase_TIM"/>
</dbReference>
<dbReference type="InterPro" id="IPR010722">
    <property type="entry name" value="BATS_dom"/>
</dbReference>
<dbReference type="InterPro" id="IPR002684">
    <property type="entry name" value="Biotin_synth/BioAB"/>
</dbReference>
<dbReference type="InterPro" id="IPR024177">
    <property type="entry name" value="Biotin_synthase"/>
</dbReference>
<dbReference type="InterPro" id="IPR006638">
    <property type="entry name" value="Elp3/MiaA/NifB-like_rSAM"/>
</dbReference>
<dbReference type="InterPro" id="IPR007197">
    <property type="entry name" value="rSAM"/>
</dbReference>
<dbReference type="NCBIfam" id="TIGR00433">
    <property type="entry name" value="bioB"/>
    <property type="match status" value="1"/>
</dbReference>
<dbReference type="PANTHER" id="PTHR22976">
    <property type="entry name" value="BIOTIN SYNTHASE"/>
    <property type="match status" value="1"/>
</dbReference>
<dbReference type="PANTHER" id="PTHR22976:SF2">
    <property type="entry name" value="BIOTIN SYNTHASE, MITOCHONDRIAL"/>
    <property type="match status" value="1"/>
</dbReference>
<dbReference type="Pfam" id="PF06968">
    <property type="entry name" value="BATS"/>
    <property type="match status" value="1"/>
</dbReference>
<dbReference type="Pfam" id="PF04055">
    <property type="entry name" value="Radical_SAM"/>
    <property type="match status" value="1"/>
</dbReference>
<dbReference type="PIRSF" id="PIRSF001619">
    <property type="entry name" value="Biotin_synth"/>
    <property type="match status" value="1"/>
</dbReference>
<dbReference type="SFLD" id="SFLDG01060">
    <property type="entry name" value="BATS_domain_containing"/>
    <property type="match status" value="1"/>
</dbReference>
<dbReference type="SFLD" id="SFLDF00272">
    <property type="entry name" value="biotin_synthase"/>
    <property type="match status" value="1"/>
</dbReference>
<dbReference type="SMART" id="SM00876">
    <property type="entry name" value="BATS"/>
    <property type="match status" value="1"/>
</dbReference>
<dbReference type="SMART" id="SM00729">
    <property type="entry name" value="Elp3"/>
    <property type="match status" value="1"/>
</dbReference>
<dbReference type="SUPFAM" id="SSF102114">
    <property type="entry name" value="Radical SAM enzymes"/>
    <property type="match status" value="1"/>
</dbReference>
<dbReference type="PROSITE" id="PS51918">
    <property type="entry name" value="RADICAL_SAM"/>
    <property type="match status" value="1"/>
</dbReference>
<organism>
    <name type="scientific">Paraburkholderia phymatum (strain DSM 17167 / CIP 108236 / LMG 21445 / STM815)</name>
    <name type="common">Burkholderia phymatum</name>
    <dbReference type="NCBI Taxonomy" id="391038"/>
    <lineage>
        <taxon>Bacteria</taxon>
        <taxon>Pseudomonadati</taxon>
        <taxon>Pseudomonadota</taxon>
        <taxon>Betaproteobacteria</taxon>
        <taxon>Burkholderiales</taxon>
        <taxon>Burkholderiaceae</taxon>
        <taxon>Paraburkholderia</taxon>
    </lineage>
</organism>
<gene>
    <name evidence="1" type="primary">bioB</name>
    <name type="ordered locus">Bphy_0170</name>
</gene>
<sequence length="351" mass="38455">MSQIQTAPLPVMPSQAAAAADAAASRWKVADVAALYELPFNDLLFRAQQVHREHFDANTVQLSTLLSIKTGGCEEDCAYCPQSVHHETGLKAEKLMEVEEVLAAARVAKENGATRFCMGAAWRNPKDRHLEPIKDMIRGVKSMGLETCVTLGMLEAHQAQALREAGLDYYNHNLDTSPEFYGQIISTRTYQDRLDTLEHVRDAGINVCCGGIVGLGESRRERAGLIAQLANMEPYPESVPINNLVQVEGTPLTGTEALDPFEFVRTIAVARITMPRAMVRLSAGREQMDEALQAMCFLAGANSIFYGDQLLTTSNPQAEADRKLLARLGIRAEAAQQMPAERECSHGCEGH</sequence>
<feature type="chain" id="PRO_0000381272" description="Biotin synthase">
    <location>
        <begin position="1"/>
        <end position="351"/>
    </location>
</feature>
<feature type="domain" description="Radical SAM core" evidence="2">
    <location>
        <begin position="58"/>
        <end position="285"/>
    </location>
</feature>
<feature type="binding site" evidence="1">
    <location>
        <position position="73"/>
    </location>
    <ligand>
        <name>[4Fe-4S] cluster</name>
        <dbReference type="ChEBI" id="CHEBI:49883"/>
        <note>4Fe-4S-S-AdoMet</note>
    </ligand>
</feature>
<feature type="binding site" evidence="1">
    <location>
        <position position="77"/>
    </location>
    <ligand>
        <name>[4Fe-4S] cluster</name>
        <dbReference type="ChEBI" id="CHEBI:49883"/>
        <note>4Fe-4S-S-AdoMet</note>
    </ligand>
</feature>
<feature type="binding site" evidence="1">
    <location>
        <position position="80"/>
    </location>
    <ligand>
        <name>[4Fe-4S] cluster</name>
        <dbReference type="ChEBI" id="CHEBI:49883"/>
        <note>4Fe-4S-S-AdoMet</note>
    </ligand>
</feature>
<feature type="binding site" evidence="1">
    <location>
        <position position="117"/>
    </location>
    <ligand>
        <name>[2Fe-2S] cluster</name>
        <dbReference type="ChEBI" id="CHEBI:190135"/>
    </ligand>
</feature>
<feature type="binding site" evidence="1">
    <location>
        <position position="148"/>
    </location>
    <ligand>
        <name>[2Fe-2S] cluster</name>
        <dbReference type="ChEBI" id="CHEBI:190135"/>
    </ligand>
</feature>
<feature type="binding site" evidence="1">
    <location>
        <position position="208"/>
    </location>
    <ligand>
        <name>[2Fe-2S] cluster</name>
        <dbReference type="ChEBI" id="CHEBI:190135"/>
    </ligand>
</feature>
<feature type="binding site" evidence="1">
    <location>
        <position position="280"/>
    </location>
    <ligand>
        <name>[2Fe-2S] cluster</name>
        <dbReference type="ChEBI" id="CHEBI:190135"/>
    </ligand>
</feature>
<accession>B2JKH4</accession>
<comment type="function">
    <text evidence="1">Catalyzes the conversion of dethiobiotin (DTB) to biotin by the insertion of a sulfur atom into dethiobiotin via a radical-based mechanism.</text>
</comment>
<comment type="catalytic activity">
    <reaction evidence="1">
        <text>(4R,5S)-dethiobiotin + (sulfur carrier)-SH + 2 reduced [2Fe-2S]-[ferredoxin] + 2 S-adenosyl-L-methionine = (sulfur carrier)-H + biotin + 2 5'-deoxyadenosine + 2 L-methionine + 2 oxidized [2Fe-2S]-[ferredoxin]</text>
        <dbReference type="Rhea" id="RHEA:22060"/>
        <dbReference type="Rhea" id="RHEA-COMP:10000"/>
        <dbReference type="Rhea" id="RHEA-COMP:10001"/>
        <dbReference type="Rhea" id="RHEA-COMP:14737"/>
        <dbReference type="Rhea" id="RHEA-COMP:14739"/>
        <dbReference type="ChEBI" id="CHEBI:17319"/>
        <dbReference type="ChEBI" id="CHEBI:29917"/>
        <dbReference type="ChEBI" id="CHEBI:33737"/>
        <dbReference type="ChEBI" id="CHEBI:33738"/>
        <dbReference type="ChEBI" id="CHEBI:57586"/>
        <dbReference type="ChEBI" id="CHEBI:57844"/>
        <dbReference type="ChEBI" id="CHEBI:59789"/>
        <dbReference type="ChEBI" id="CHEBI:64428"/>
        <dbReference type="ChEBI" id="CHEBI:149473"/>
        <dbReference type="EC" id="2.8.1.6"/>
    </reaction>
</comment>
<comment type="cofactor">
    <cofactor evidence="1">
        <name>[4Fe-4S] cluster</name>
        <dbReference type="ChEBI" id="CHEBI:49883"/>
    </cofactor>
    <text evidence="1">Binds 1 [4Fe-4S] cluster. The cluster is coordinated with 3 cysteines and an exchangeable S-adenosyl-L-methionine.</text>
</comment>
<comment type="cofactor">
    <cofactor evidence="1">
        <name>[2Fe-2S] cluster</name>
        <dbReference type="ChEBI" id="CHEBI:190135"/>
    </cofactor>
    <text evidence="1">Binds 1 [2Fe-2S] cluster. The cluster is coordinated with 3 cysteines and 1 arginine.</text>
</comment>
<comment type="pathway">
    <text evidence="1">Cofactor biosynthesis; biotin biosynthesis; biotin from 7,8-diaminononanoate: step 2/2.</text>
</comment>
<comment type="subunit">
    <text evidence="1">Homodimer.</text>
</comment>
<comment type="similarity">
    <text evidence="1">Belongs to the radical SAM superfamily. Biotin synthase family.</text>
</comment>
<evidence type="ECO:0000255" key="1">
    <source>
        <dbReference type="HAMAP-Rule" id="MF_01694"/>
    </source>
</evidence>
<evidence type="ECO:0000255" key="2">
    <source>
        <dbReference type="PROSITE-ProRule" id="PRU01266"/>
    </source>
</evidence>
<keyword id="KW-0001">2Fe-2S</keyword>
<keyword id="KW-0004">4Fe-4S</keyword>
<keyword id="KW-0093">Biotin biosynthesis</keyword>
<keyword id="KW-0408">Iron</keyword>
<keyword id="KW-0411">Iron-sulfur</keyword>
<keyword id="KW-0479">Metal-binding</keyword>
<keyword id="KW-1185">Reference proteome</keyword>
<keyword id="KW-0949">S-adenosyl-L-methionine</keyword>
<keyword id="KW-0808">Transferase</keyword>
<name>BIOB_PARP8</name>
<reference key="1">
    <citation type="journal article" date="2014" name="Stand. Genomic Sci.">
        <title>Complete genome sequence of Burkholderia phymatum STM815(T), a broad host range and efficient nitrogen-fixing symbiont of Mimosa species.</title>
        <authorList>
            <person name="Moulin L."/>
            <person name="Klonowska A."/>
            <person name="Caroline B."/>
            <person name="Booth K."/>
            <person name="Vriezen J.A."/>
            <person name="Melkonian R."/>
            <person name="James E.K."/>
            <person name="Young J.P."/>
            <person name="Bena G."/>
            <person name="Hauser L."/>
            <person name="Land M."/>
            <person name="Kyrpides N."/>
            <person name="Bruce D."/>
            <person name="Chain P."/>
            <person name="Copeland A."/>
            <person name="Pitluck S."/>
            <person name="Woyke T."/>
            <person name="Lizotte-Waniewski M."/>
            <person name="Bristow J."/>
            <person name="Riley M."/>
        </authorList>
    </citation>
    <scope>NUCLEOTIDE SEQUENCE [LARGE SCALE GENOMIC DNA]</scope>
    <source>
        <strain>DSM 17167 / CIP 108236 / LMG 21445 / STM815</strain>
    </source>
</reference>